<organism>
    <name type="scientific">Oryza sativa subsp. japonica</name>
    <name type="common">Rice</name>
    <dbReference type="NCBI Taxonomy" id="39947"/>
    <lineage>
        <taxon>Eukaryota</taxon>
        <taxon>Viridiplantae</taxon>
        <taxon>Streptophyta</taxon>
        <taxon>Embryophyta</taxon>
        <taxon>Tracheophyta</taxon>
        <taxon>Spermatophyta</taxon>
        <taxon>Magnoliopsida</taxon>
        <taxon>Liliopsida</taxon>
        <taxon>Poales</taxon>
        <taxon>Poaceae</taxon>
        <taxon>BOP clade</taxon>
        <taxon>Oryzoideae</taxon>
        <taxon>Oryzeae</taxon>
        <taxon>Oryzinae</taxon>
        <taxon>Oryza</taxon>
        <taxon>Oryza sativa</taxon>
    </lineage>
</organism>
<accession>Q0DWQ7</accession>
<proteinExistence type="inferred from homology"/>
<reference key="1">
    <citation type="journal article" date="2005" name="Nature">
        <title>The map-based sequence of the rice genome.</title>
        <authorList>
            <consortium name="International rice genome sequencing project (IRGSP)"/>
        </authorList>
    </citation>
    <scope>NUCLEOTIDE SEQUENCE [LARGE SCALE GENOMIC DNA]</scope>
    <source>
        <strain>cv. Nipponbare</strain>
    </source>
</reference>
<reference key="2">
    <citation type="journal article" date="2013" name="Rice">
        <title>Improvement of the Oryza sativa Nipponbare reference genome using next generation sequence and optical map data.</title>
        <authorList>
            <person name="Kawahara Y."/>
            <person name="de la Bastide M."/>
            <person name="Hamilton J.P."/>
            <person name="Kanamori H."/>
            <person name="McCombie W.R."/>
            <person name="Ouyang S."/>
            <person name="Schwartz D.C."/>
            <person name="Tanaka T."/>
            <person name="Wu J."/>
            <person name="Zhou S."/>
            <person name="Childs K.L."/>
            <person name="Davidson R.M."/>
            <person name="Lin H."/>
            <person name="Quesada-Ocampo L."/>
            <person name="Vaillancourt B."/>
            <person name="Sakai H."/>
            <person name="Lee S.S."/>
            <person name="Kim J."/>
            <person name="Numa H."/>
            <person name="Itoh T."/>
            <person name="Buell C.R."/>
            <person name="Matsumoto T."/>
        </authorList>
    </citation>
    <scope>GENOME REANNOTATION</scope>
    <source>
        <strain>cv. Nipponbare</strain>
    </source>
</reference>
<reference key="3">
    <citation type="journal article" date="2006" name="Mol. Genet. Genomics">
        <title>Genome-wide analysis of cyclin family in rice (Oryza sativa L.).</title>
        <authorList>
            <person name="La H."/>
            <person name="Li J."/>
            <person name="Ji Z."/>
            <person name="Cheng Y."/>
            <person name="Li X."/>
            <person name="Jiang S."/>
            <person name="Venkatesh P.N."/>
            <person name="Ramachandran S."/>
        </authorList>
    </citation>
    <scope>GENE FAMILY</scope>
    <scope>NOMENCLATURE</scope>
</reference>
<evidence type="ECO:0000305" key="1"/>
<protein>
    <recommendedName>
        <fullName>Cyclin-B1-2</fullName>
    </recommendedName>
    <alternativeName>
        <fullName>G2/mitotic-specific cyclin-B1-2</fullName>
        <shortName>CycB1;2</shortName>
    </alternativeName>
</protein>
<comment type="similarity">
    <text evidence="1">Belongs to the cyclin family. Cyclin AB subfamily.</text>
</comment>
<keyword id="KW-0131">Cell cycle</keyword>
<keyword id="KW-0132">Cell division</keyword>
<keyword id="KW-0195">Cyclin</keyword>
<keyword id="KW-1185">Reference proteome</keyword>
<sequence length="391" mass="43121">MASGGVVKKEIGGNHDVVRFGVNDSVKGDLAPPHPLQASVHKEAKFWADKKRFGAEAIYGSAFNIRKDLDAQILSKFQRPPGALPSSMLGYEALTGSLDDFGFEDYLNYAAASEDGWVLGRGALELLLGGTAYTQATSAPQISLSMQQVQRRELQLVAVSAMLIDCKYEEIWAPEVNDFIFISDSAYTREQILAMEKGILNKLQWNLTIPTPYVFIMMLSASADNKSDKENAEALKFKRLSQSRQQLIDWSVKIKVSKEHGGFMRFIQVSCLGASASSSRMLRAKAAGEESVLKEFPEPLRLLISHRQSMGTCILNFHSRIQPVYVVDVAAAIVNSLKDDGTSMGKSYGLGGPEIYTVHDLAELMYETICEWPRYIDVPLPIARAIASPES</sequence>
<feature type="chain" id="PRO_0000287009" description="Cyclin-B1-2">
    <location>
        <begin position="1"/>
        <end position="391"/>
    </location>
</feature>
<gene>
    <name type="primary">CYCB1-2</name>
    <name type="ordered locus">Os02g0801300</name>
    <name type="ordered locus">LOC_Os02g55720</name>
</gene>
<name>CCB12_ORYSJ</name>
<dbReference type="EMBL" id="AP007227">
    <property type="status" value="NOT_ANNOTATED_CDS"/>
    <property type="molecule type" value="Genomic_DNA"/>
</dbReference>
<dbReference type="EMBL" id="AP014958">
    <property type="status" value="NOT_ANNOTATED_CDS"/>
    <property type="molecule type" value="Genomic_DNA"/>
</dbReference>
<dbReference type="SMR" id="Q0DWQ7"/>
<dbReference type="STRING" id="39947.Q0DWQ7"/>
<dbReference type="PaxDb" id="39947-Q0DWQ7"/>
<dbReference type="eggNOG" id="KOG0653">
    <property type="taxonomic scope" value="Eukaryota"/>
</dbReference>
<dbReference type="InParanoid" id="Q0DWQ7"/>
<dbReference type="Proteomes" id="UP000000763">
    <property type="component" value="Chromosome 2"/>
</dbReference>
<dbReference type="Proteomes" id="UP000059680">
    <property type="component" value="Chromosome 2"/>
</dbReference>
<dbReference type="GO" id="GO:0000307">
    <property type="term" value="C:cyclin-dependent protein kinase holoenzyme complex"/>
    <property type="evidence" value="ECO:0000318"/>
    <property type="project" value="GO_Central"/>
</dbReference>
<dbReference type="GO" id="GO:0005737">
    <property type="term" value="C:cytoplasm"/>
    <property type="evidence" value="ECO:0000318"/>
    <property type="project" value="GO_Central"/>
</dbReference>
<dbReference type="GO" id="GO:0005634">
    <property type="term" value="C:nucleus"/>
    <property type="evidence" value="ECO:0000318"/>
    <property type="project" value="GO_Central"/>
</dbReference>
<dbReference type="GO" id="GO:0016538">
    <property type="term" value="F:cyclin-dependent protein serine/threonine kinase regulator activity"/>
    <property type="evidence" value="ECO:0000318"/>
    <property type="project" value="GO_Central"/>
</dbReference>
<dbReference type="GO" id="GO:0051301">
    <property type="term" value="P:cell division"/>
    <property type="evidence" value="ECO:0007669"/>
    <property type="project" value="UniProtKB-KW"/>
</dbReference>
<dbReference type="GO" id="GO:0000082">
    <property type="term" value="P:G1/S transition of mitotic cell cycle"/>
    <property type="evidence" value="ECO:0000318"/>
    <property type="project" value="GO_Central"/>
</dbReference>
<dbReference type="FunFam" id="1.10.472.10:FF:000134">
    <property type="entry name" value="Os02g0800500 protein"/>
    <property type="match status" value="1"/>
</dbReference>
<dbReference type="Gene3D" id="1.10.472.10">
    <property type="entry name" value="Cyclin-like"/>
    <property type="match status" value="2"/>
</dbReference>
<dbReference type="Gene3D" id="3.40.50.720">
    <property type="entry name" value="NAD(P)-binding Rossmann-like Domain"/>
    <property type="match status" value="1"/>
</dbReference>
<dbReference type="InterPro" id="IPR051207">
    <property type="entry name" value="ComplexI_NDUFA9_subunit"/>
</dbReference>
<dbReference type="InterPro" id="IPR036915">
    <property type="entry name" value="Cyclin-like_sf"/>
</dbReference>
<dbReference type="InterPro" id="IPR006671">
    <property type="entry name" value="Cyclin_N"/>
</dbReference>
<dbReference type="InterPro" id="IPR036291">
    <property type="entry name" value="NAD(P)-bd_dom_sf"/>
</dbReference>
<dbReference type="PANTHER" id="PTHR12126:SF11">
    <property type="entry name" value="NADH DEHYDROGENASE [UBIQUINONE] 1 ALPHA SUBCOMPLEX SUBUNIT 9, MITOCHONDRIAL"/>
    <property type="match status" value="1"/>
</dbReference>
<dbReference type="PANTHER" id="PTHR12126">
    <property type="entry name" value="NADH-UBIQUINONE OXIDOREDUCTASE 39 KDA SUBUNIT-RELATED"/>
    <property type="match status" value="1"/>
</dbReference>
<dbReference type="Pfam" id="PF00134">
    <property type="entry name" value="Cyclin_N"/>
    <property type="match status" value="1"/>
</dbReference>
<dbReference type="Pfam" id="PF05348">
    <property type="entry name" value="UMP1"/>
    <property type="match status" value="1"/>
</dbReference>
<dbReference type="SUPFAM" id="SSF47954">
    <property type="entry name" value="Cyclin-like"/>
    <property type="match status" value="1"/>
</dbReference>
<dbReference type="SUPFAM" id="SSF51735">
    <property type="entry name" value="NAD(P)-binding Rossmann-fold domains"/>
    <property type="match status" value="1"/>
</dbReference>